<accession>Q5ZL55</accession>
<sequence length="200" mass="23259">MGNLFGRKRRSRVTEQDKAVLQLKQQRDKLRQYQKRISLGLERERELARQLLKEGKKEKAMLLLKKKRYQEQLLDKTDNQISNLERMVQDIEFTQIEMKVIEGLKIGNECLNKMHQVMSIEEVERIIGETQDAVEYQRQIDEILAGSLTEEDEDAILEELNAITQEQLELPDVPSEPLPEEPPEATPVKNRPKPELVAAS</sequence>
<feature type="initiator methionine" description="Removed" evidence="2">
    <location>
        <position position="1"/>
    </location>
</feature>
<feature type="chain" id="PRO_0000211511" description="Charged multivesicular body protein 6">
    <location>
        <begin position="2"/>
        <end position="200"/>
    </location>
</feature>
<feature type="region of interest" description="Disordered" evidence="3">
    <location>
        <begin position="169"/>
        <end position="200"/>
    </location>
</feature>
<feature type="coiled-coil region" evidence="2">
    <location>
        <begin position="10"/>
        <end position="94"/>
    </location>
</feature>
<feature type="short sequence motif" description="Type-2 MIT-interacting motif" evidence="1">
    <location>
        <begin position="168"/>
        <end position="179"/>
    </location>
</feature>
<feature type="lipid moiety-binding region" description="N-myristoyl glycine" evidence="2">
    <location>
        <position position="2"/>
    </location>
</feature>
<proteinExistence type="evidence at transcript level"/>
<keyword id="KW-0175">Coiled coil</keyword>
<keyword id="KW-0967">Endosome</keyword>
<keyword id="KW-0449">Lipoprotein</keyword>
<keyword id="KW-0472">Membrane</keyword>
<keyword id="KW-0519">Myristate</keyword>
<keyword id="KW-0653">Protein transport</keyword>
<keyword id="KW-1185">Reference proteome</keyword>
<keyword id="KW-0813">Transport</keyword>
<dbReference type="EMBL" id="AJ719879">
    <property type="protein sequence ID" value="CAG31538.1"/>
    <property type="molecule type" value="mRNA"/>
</dbReference>
<dbReference type="RefSeq" id="NP_001026700.1">
    <property type="nucleotide sequence ID" value="NM_001031529.2"/>
</dbReference>
<dbReference type="SMR" id="Q5ZL55"/>
<dbReference type="FunCoup" id="Q5ZL55">
    <property type="interactions" value="1643"/>
</dbReference>
<dbReference type="STRING" id="9031.ENSGALP00000041343"/>
<dbReference type="GlyGen" id="Q5ZL55">
    <property type="glycosylation" value="1 site"/>
</dbReference>
<dbReference type="PaxDb" id="9031-ENSGALP00000041343"/>
<dbReference type="GeneID" id="428673"/>
<dbReference type="KEGG" id="gga:428673"/>
<dbReference type="CTD" id="79643"/>
<dbReference type="VEuPathDB" id="HostDB:geneid_428673"/>
<dbReference type="eggNOG" id="KOG2910">
    <property type="taxonomic scope" value="Eukaryota"/>
</dbReference>
<dbReference type="HOGENOM" id="CLU_086201_3_1_1"/>
<dbReference type="InParanoid" id="Q5ZL55"/>
<dbReference type="OMA" id="RAKQPAM"/>
<dbReference type="OrthoDB" id="441172at2759"/>
<dbReference type="PhylomeDB" id="Q5ZL55"/>
<dbReference type="Reactome" id="R-GGA-1632852">
    <property type="pathway name" value="Macroautophagy"/>
</dbReference>
<dbReference type="Reactome" id="R-GGA-5620971">
    <property type="pathway name" value="Pyroptosis"/>
</dbReference>
<dbReference type="Reactome" id="R-GGA-917729">
    <property type="pathway name" value="Endosomal Sorting Complex Required For Transport (ESCRT)"/>
</dbReference>
<dbReference type="Reactome" id="R-GGA-9668328">
    <property type="pathway name" value="Sealing of the nuclear envelope (NE) by ESCRT-III"/>
</dbReference>
<dbReference type="PRO" id="PR:Q5ZL55"/>
<dbReference type="Proteomes" id="UP000000539">
    <property type="component" value="Chromosome 18"/>
</dbReference>
<dbReference type="Bgee" id="ENSGALG00000026428">
    <property type="expression patterns" value="Expressed in muscle tissue and 14 other cell types or tissues"/>
</dbReference>
<dbReference type="GO" id="GO:0000815">
    <property type="term" value="C:ESCRT III complex"/>
    <property type="evidence" value="ECO:0000318"/>
    <property type="project" value="GO_Central"/>
</dbReference>
<dbReference type="GO" id="GO:0031902">
    <property type="term" value="C:late endosome membrane"/>
    <property type="evidence" value="ECO:0007669"/>
    <property type="project" value="UniProtKB-SubCell"/>
</dbReference>
<dbReference type="GO" id="GO:0005771">
    <property type="term" value="C:multivesicular body"/>
    <property type="evidence" value="ECO:0000318"/>
    <property type="project" value="GO_Central"/>
</dbReference>
<dbReference type="GO" id="GO:0032511">
    <property type="term" value="P:late endosome to vacuole transport via multivesicular body sorting pathway"/>
    <property type="evidence" value="ECO:0000318"/>
    <property type="project" value="GO_Central"/>
</dbReference>
<dbReference type="GO" id="GO:0015031">
    <property type="term" value="P:protein transport"/>
    <property type="evidence" value="ECO:0007669"/>
    <property type="project" value="UniProtKB-KW"/>
</dbReference>
<dbReference type="GO" id="GO:0006900">
    <property type="term" value="P:vesicle budding from membrane"/>
    <property type="evidence" value="ECO:0000318"/>
    <property type="project" value="GO_Central"/>
</dbReference>
<dbReference type="InterPro" id="IPR005024">
    <property type="entry name" value="Snf7_fam"/>
</dbReference>
<dbReference type="PANTHER" id="PTHR22761">
    <property type="entry name" value="CHARGED MULTIVESICULAR BODY PROTEIN"/>
    <property type="match status" value="1"/>
</dbReference>
<dbReference type="PANTHER" id="PTHR22761:SF5">
    <property type="entry name" value="CHARGED MULTIVESICULAR BODY PROTEIN 6"/>
    <property type="match status" value="1"/>
</dbReference>
<dbReference type="Pfam" id="PF03357">
    <property type="entry name" value="Snf7"/>
    <property type="match status" value="1"/>
</dbReference>
<comment type="function">
    <text evidence="1">Probable core component of the endosomal sorting required for transport complex III (ESCRT-III) which is involved in multivesicular bodies (MVBs) formation and sorting of endosomal cargo proteins into MVBs. MVBs contain intraluminal vesicles (ILVs) that are generated by invagination and scission from the limiting membrane of the endosome and mostly are delivered to lysosomes enabling degradation of membrane proteins, such as stimulated growth factor receptors, lysosomal enzymes and lipids. In the ESCRT-III complex, it probably serves as an acceptor for the ESCRT-II complex on endosomal membranes (By similarity).</text>
</comment>
<comment type="subunit">
    <text evidence="1">Probable core component of the endosomal sorting required for transport complex III (ESCRT-III). ESCRT-III components are thought to multimerize to form a flat lattice on the perimeter membrane of the endosome (By similarity).</text>
</comment>
<comment type="subcellular location">
    <subcellularLocation>
        <location evidence="1">Endomembrane system</location>
        <topology evidence="1">Lipid-anchor</topology>
    </subcellularLocation>
    <subcellularLocation>
        <location evidence="1">Late endosome membrane</location>
    </subcellularLocation>
</comment>
<comment type="similarity">
    <text evidence="4">Belongs to the SNF7 family.</text>
</comment>
<gene>
    <name type="primary">CHMP6</name>
    <name type="ORF">RCJMB04_7k13</name>
</gene>
<evidence type="ECO:0000250" key="1"/>
<evidence type="ECO:0000255" key="2"/>
<evidence type="ECO:0000256" key="3">
    <source>
        <dbReference type="SAM" id="MobiDB-lite"/>
    </source>
</evidence>
<evidence type="ECO:0000305" key="4"/>
<reference key="1">
    <citation type="journal article" date="2005" name="Genome Biol.">
        <title>Full-length cDNAs from chicken bursal lymphocytes to facilitate gene function analysis.</title>
        <authorList>
            <person name="Caldwell R.B."/>
            <person name="Kierzek A.M."/>
            <person name="Arakawa H."/>
            <person name="Bezzubov Y."/>
            <person name="Zaim J."/>
            <person name="Fiedler P."/>
            <person name="Kutter S."/>
            <person name="Blagodatski A."/>
            <person name="Kostovska D."/>
            <person name="Koter M."/>
            <person name="Plachy J."/>
            <person name="Carninci P."/>
            <person name="Hayashizaki Y."/>
            <person name="Buerstedde J.-M."/>
        </authorList>
    </citation>
    <scope>NUCLEOTIDE SEQUENCE [LARGE SCALE MRNA]</scope>
    <source>
        <strain>CB</strain>
        <tissue>Bursa of Fabricius</tissue>
    </source>
</reference>
<name>CHMP6_CHICK</name>
<organism>
    <name type="scientific">Gallus gallus</name>
    <name type="common">Chicken</name>
    <dbReference type="NCBI Taxonomy" id="9031"/>
    <lineage>
        <taxon>Eukaryota</taxon>
        <taxon>Metazoa</taxon>
        <taxon>Chordata</taxon>
        <taxon>Craniata</taxon>
        <taxon>Vertebrata</taxon>
        <taxon>Euteleostomi</taxon>
        <taxon>Archelosauria</taxon>
        <taxon>Archosauria</taxon>
        <taxon>Dinosauria</taxon>
        <taxon>Saurischia</taxon>
        <taxon>Theropoda</taxon>
        <taxon>Coelurosauria</taxon>
        <taxon>Aves</taxon>
        <taxon>Neognathae</taxon>
        <taxon>Galloanserae</taxon>
        <taxon>Galliformes</taxon>
        <taxon>Phasianidae</taxon>
        <taxon>Phasianinae</taxon>
        <taxon>Gallus</taxon>
    </lineage>
</organism>
<protein>
    <recommendedName>
        <fullName>Charged multivesicular body protein 6</fullName>
    </recommendedName>
    <alternativeName>
        <fullName>Chromatin-modifying protein 6</fullName>
    </alternativeName>
</protein>